<organism>
    <name type="scientific">Bacillus subtilis (strain 168)</name>
    <dbReference type="NCBI Taxonomy" id="224308"/>
    <lineage>
        <taxon>Bacteria</taxon>
        <taxon>Bacillati</taxon>
        <taxon>Bacillota</taxon>
        <taxon>Bacilli</taxon>
        <taxon>Bacillales</taxon>
        <taxon>Bacillaceae</taxon>
        <taxon>Bacillus</taxon>
    </lineage>
</organism>
<keyword id="KW-0002">3D-structure</keyword>
<keyword id="KW-0092">Biotin</keyword>
<keyword id="KW-0450">Lipoyl</keyword>
<keyword id="KW-1185">Reference proteome</keyword>
<proteinExistence type="evidence at protein level"/>
<gene>
    <name type="primary">yngHB</name>
    <name type="ordered locus">BSU18239</name>
</gene>
<feature type="initiator methionine" description="Removed" evidence="1">
    <location>
        <position position="1"/>
    </location>
</feature>
<feature type="chain" id="PRO_0000389494" description="Biotin/lipoyl attachment protein">
    <location>
        <begin position="2"/>
        <end position="73"/>
    </location>
</feature>
<feature type="domain" description="Biotinyl-binding" evidence="2">
    <location>
        <begin position="2"/>
        <end position="69"/>
    </location>
</feature>
<feature type="modified residue" description="N6-biotinyllysine; alternate" evidence="2 3">
    <location>
        <position position="35"/>
    </location>
</feature>
<feature type="modified residue" description="N6-lipoyllysine; alternate" evidence="3">
    <location>
        <position position="35"/>
    </location>
</feature>
<feature type="sequence variant" description="In strain: ATCC 6633.">
    <original>S</original>
    <variation>I</variation>
    <location>
        <position position="4"/>
    </location>
</feature>
<feature type="sequence variant" description="In strain: ATCC 6633.">
    <original>Q</original>
    <variation>H</variation>
    <location>
        <position position="21"/>
    </location>
</feature>
<feature type="sequence variant" description="In strain: ATCC 6633.">
    <original>I</original>
    <variation>T</variation>
    <location>
        <position position="47"/>
    </location>
</feature>
<feature type="sequence variant" description="In strain: ATCC 6633.">
    <original>K</original>
    <variation>N</variation>
    <location>
        <position position="54"/>
    </location>
</feature>
<feature type="sequence variant" description="In strain: ATCC 6633.">
    <original>N</original>
    <variation>D</variation>
    <location>
        <position position="70"/>
    </location>
</feature>
<feature type="mutagenesis site" description="No changes in biotinylation in E.coli." evidence="3">
    <original>W</original>
    <variation>M</variation>
    <location>
        <position position="12"/>
    </location>
</feature>
<feature type="strand" evidence="4">
    <location>
        <begin position="7"/>
        <end position="14"/>
    </location>
</feature>
<feature type="strand" evidence="4">
    <location>
        <begin position="27"/>
        <end position="33"/>
    </location>
</feature>
<feature type="strand" evidence="4">
    <location>
        <begin position="36"/>
        <end position="41"/>
    </location>
</feature>
<feature type="strand" evidence="4">
    <location>
        <begin position="46"/>
        <end position="53"/>
    </location>
</feature>
<feature type="strand" evidence="4">
    <location>
        <begin position="64"/>
        <end position="68"/>
    </location>
</feature>
<feature type="helix" evidence="4">
    <location>
        <begin position="69"/>
        <end position="71"/>
    </location>
</feature>
<sequence length="73" mass="8041">MTVSIQMAGNLWKVHVKAGDQIEKGQEVAILESMKMEIPIVADRSGIVKEVKKKEGDFVNEGDVLLELSNSTQ</sequence>
<comment type="induction">
    <text evidence="3">Detected in log-phase B.subtilis cells (at protein level).</text>
</comment>
<comment type="PTM">
    <text evidence="3">Can be both biotinylated and lipoylated on Lys-35 upon overexpression in E.coli depending on the growth medium; the nature of the modification in situ in B.subtilis is unknown.</text>
</comment>
<comment type="mass spectrometry" mass="7913.0" method="Unknown" evidence="3">
    <text>Upon overexpression in E.coli.</text>
</comment>
<reference key="1">
    <citation type="journal article" date="1999" name="Proc. Natl. Acad. Sci. U.S.A.">
        <title>The mycosubtilin synthetase of Bacillus subtilis ATCC6633: a multifunctional hybrid between a peptide synthetase, an amino transferase, and a fatty acid synthase.</title>
        <authorList>
            <person name="Duitman E.H."/>
            <person name="Hamoen L.W."/>
            <person name="Rembold M."/>
            <person name="Venema G."/>
            <person name="Seitz H."/>
            <person name="Saenger W."/>
            <person name="Bernhard F."/>
            <person name="Reinhardt R."/>
            <person name="Schmidt M."/>
            <person name="Ullrich C."/>
            <person name="Stein T."/>
            <person name="Leenders F."/>
            <person name="Vater J."/>
        </authorList>
    </citation>
    <scope>NUCLEOTIDE SEQUENCE [GENOMIC DNA]</scope>
    <source>
        <strain>ATCC 6633 / PCI 219 / NRS 231</strain>
    </source>
</reference>
<reference key="2">
    <citation type="journal article" date="1997" name="Nature">
        <title>The complete genome sequence of the Gram-positive bacterium Bacillus subtilis.</title>
        <authorList>
            <person name="Kunst F."/>
            <person name="Ogasawara N."/>
            <person name="Moszer I."/>
            <person name="Albertini A.M."/>
            <person name="Alloni G."/>
            <person name="Azevedo V."/>
            <person name="Bertero M.G."/>
            <person name="Bessieres P."/>
            <person name="Bolotin A."/>
            <person name="Borchert S."/>
            <person name="Borriss R."/>
            <person name="Boursier L."/>
            <person name="Brans A."/>
            <person name="Braun M."/>
            <person name="Brignell S.C."/>
            <person name="Bron S."/>
            <person name="Brouillet S."/>
            <person name="Bruschi C.V."/>
            <person name="Caldwell B."/>
            <person name="Capuano V."/>
            <person name="Carter N.M."/>
            <person name="Choi S.-K."/>
            <person name="Codani J.-J."/>
            <person name="Connerton I.F."/>
            <person name="Cummings N.J."/>
            <person name="Daniel R.A."/>
            <person name="Denizot F."/>
            <person name="Devine K.M."/>
            <person name="Duesterhoeft A."/>
            <person name="Ehrlich S.D."/>
            <person name="Emmerson P.T."/>
            <person name="Entian K.-D."/>
            <person name="Errington J."/>
            <person name="Fabret C."/>
            <person name="Ferrari E."/>
            <person name="Foulger D."/>
            <person name="Fritz C."/>
            <person name="Fujita M."/>
            <person name="Fujita Y."/>
            <person name="Fuma S."/>
            <person name="Galizzi A."/>
            <person name="Galleron N."/>
            <person name="Ghim S.-Y."/>
            <person name="Glaser P."/>
            <person name="Goffeau A."/>
            <person name="Golightly E.J."/>
            <person name="Grandi G."/>
            <person name="Guiseppi G."/>
            <person name="Guy B.J."/>
            <person name="Haga K."/>
            <person name="Haiech J."/>
            <person name="Harwood C.R."/>
            <person name="Henaut A."/>
            <person name="Hilbert H."/>
            <person name="Holsappel S."/>
            <person name="Hosono S."/>
            <person name="Hullo M.-F."/>
            <person name="Itaya M."/>
            <person name="Jones L.-M."/>
            <person name="Joris B."/>
            <person name="Karamata D."/>
            <person name="Kasahara Y."/>
            <person name="Klaerr-Blanchard M."/>
            <person name="Klein C."/>
            <person name="Kobayashi Y."/>
            <person name="Koetter P."/>
            <person name="Koningstein G."/>
            <person name="Krogh S."/>
            <person name="Kumano M."/>
            <person name="Kurita K."/>
            <person name="Lapidus A."/>
            <person name="Lardinois S."/>
            <person name="Lauber J."/>
            <person name="Lazarevic V."/>
            <person name="Lee S.-M."/>
            <person name="Levine A."/>
            <person name="Liu H."/>
            <person name="Masuda S."/>
            <person name="Mauel C."/>
            <person name="Medigue C."/>
            <person name="Medina N."/>
            <person name="Mellado R.P."/>
            <person name="Mizuno M."/>
            <person name="Moestl D."/>
            <person name="Nakai S."/>
            <person name="Noback M."/>
            <person name="Noone D."/>
            <person name="O'Reilly M."/>
            <person name="Ogawa K."/>
            <person name="Ogiwara A."/>
            <person name="Oudega B."/>
            <person name="Park S.-H."/>
            <person name="Parro V."/>
            <person name="Pohl T.M."/>
            <person name="Portetelle D."/>
            <person name="Porwollik S."/>
            <person name="Prescott A.M."/>
            <person name="Presecan E."/>
            <person name="Pujic P."/>
            <person name="Purnelle B."/>
            <person name="Rapoport G."/>
            <person name="Rey M."/>
            <person name="Reynolds S."/>
            <person name="Rieger M."/>
            <person name="Rivolta C."/>
            <person name="Rocha E."/>
            <person name="Roche B."/>
            <person name="Rose M."/>
            <person name="Sadaie Y."/>
            <person name="Sato T."/>
            <person name="Scanlan E."/>
            <person name="Schleich S."/>
            <person name="Schroeter R."/>
            <person name="Scoffone F."/>
            <person name="Sekiguchi J."/>
            <person name="Sekowska A."/>
            <person name="Seror S.J."/>
            <person name="Serror P."/>
            <person name="Shin B.-S."/>
            <person name="Soldo B."/>
            <person name="Sorokin A."/>
            <person name="Tacconi E."/>
            <person name="Takagi T."/>
            <person name="Takahashi H."/>
            <person name="Takemaru K."/>
            <person name="Takeuchi M."/>
            <person name="Tamakoshi A."/>
            <person name="Tanaka T."/>
            <person name="Terpstra P."/>
            <person name="Tognoni A."/>
            <person name="Tosato V."/>
            <person name="Uchiyama S."/>
            <person name="Vandenbol M."/>
            <person name="Vannier F."/>
            <person name="Vassarotti A."/>
            <person name="Viari A."/>
            <person name="Wambutt R."/>
            <person name="Wedler E."/>
            <person name="Wedler H."/>
            <person name="Weitzenegger T."/>
            <person name="Winters P."/>
            <person name="Wipat A."/>
            <person name="Yamamoto H."/>
            <person name="Yamane K."/>
            <person name="Yasumoto K."/>
            <person name="Yata K."/>
            <person name="Yoshida K."/>
            <person name="Yoshikawa H.-F."/>
            <person name="Zumstein E."/>
            <person name="Yoshikawa H."/>
            <person name="Danchin A."/>
        </authorList>
    </citation>
    <scope>NUCLEOTIDE SEQUENCE [LARGE SCALE GENOMIC DNA]</scope>
    <source>
        <strain>168</strain>
    </source>
</reference>
<reference key="3">
    <citation type="journal article" date="2006" name="J. Biol. Chem.">
        <title>Identification and solution structures of a single domain biotin/lipoyl attachment protein from Bacillus subtilis.</title>
        <authorList>
            <person name="Cui G."/>
            <person name="Nan B."/>
            <person name="Hu J."/>
            <person name="Wang Y."/>
            <person name="Jin C."/>
            <person name="Xia B."/>
        </authorList>
    </citation>
    <scope>STRUCTURE BY NMR OF 2-73 OF THE APO- AND BIOTINYLATED FORMS</scope>
    <scope>BIOTINYLATION AT LYS-35</scope>
    <scope>LIPOYLATION AT LYS-35</scope>
    <scope>INDUCTION</scope>
    <scope>MASS SPECTROMETRY</scope>
    <scope>MUTAGENESIS OF TRP-12</scope>
    <source>
        <strain>168</strain>
    </source>
</reference>
<dbReference type="EMBL" id="AF184956">
    <property type="protein sequence ID" value="AAF08803.1"/>
    <property type="molecule type" value="Genomic_DNA"/>
</dbReference>
<dbReference type="EMBL" id="AL009126">
    <property type="protein sequence ID" value="CAX52627.1"/>
    <property type="molecule type" value="Genomic_DNA"/>
</dbReference>
<dbReference type="PIR" id="T44814">
    <property type="entry name" value="T44814"/>
</dbReference>
<dbReference type="RefSeq" id="WP_003245519.1">
    <property type="nucleotide sequence ID" value="NZ_OZ025638.1"/>
</dbReference>
<dbReference type="PDB" id="1Z6H">
    <property type="method" value="NMR"/>
    <property type="chains" value="A=2-73"/>
</dbReference>
<dbReference type="PDB" id="1Z7T">
    <property type="method" value="NMR"/>
    <property type="chains" value="A=2-73"/>
</dbReference>
<dbReference type="PDB" id="2B8F">
    <property type="method" value="NMR"/>
    <property type="chains" value="A=2-73"/>
</dbReference>
<dbReference type="PDB" id="2B8G">
    <property type="method" value="NMR"/>
    <property type="chains" value="A=2-73"/>
</dbReference>
<dbReference type="PDBsum" id="1Z6H"/>
<dbReference type="PDBsum" id="1Z7T"/>
<dbReference type="PDBsum" id="2B8F"/>
<dbReference type="PDBsum" id="2B8G"/>
<dbReference type="BMRB" id="C0H419"/>
<dbReference type="SMR" id="C0H419"/>
<dbReference type="FunCoup" id="C0H419">
    <property type="interactions" value="43"/>
</dbReference>
<dbReference type="STRING" id="224308.BSU18239"/>
<dbReference type="DrugBank" id="DB07497">
    <property type="generic name" value="5-(hexahydro-2-oxo-1H-thieno[3,4-D]imidazol-6-yl)pentanal"/>
</dbReference>
<dbReference type="PaxDb" id="224308-BSU18239"/>
<dbReference type="EnsemblBacteria" id="CAX52627">
    <property type="protein sequence ID" value="CAX52627"/>
    <property type="gene ID" value="BSU_18239"/>
</dbReference>
<dbReference type="GeneID" id="8303012"/>
<dbReference type="KEGG" id="bsu:BSU18239"/>
<dbReference type="PATRIC" id="fig|224308.179.peg.1989"/>
<dbReference type="eggNOG" id="COG0511">
    <property type="taxonomic scope" value="Bacteria"/>
</dbReference>
<dbReference type="InParanoid" id="C0H419"/>
<dbReference type="OrthoDB" id="163546at2"/>
<dbReference type="PhylomeDB" id="C0H419"/>
<dbReference type="BioCyc" id="BSUB:BSU18239-MONOMER"/>
<dbReference type="EvolutionaryTrace" id="C0H419"/>
<dbReference type="Proteomes" id="UP000001570">
    <property type="component" value="Chromosome"/>
</dbReference>
<dbReference type="CDD" id="cd06850">
    <property type="entry name" value="biotinyl_domain"/>
    <property type="match status" value="1"/>
</dbReference>
<dbReference type="FunFam" id="2.40.50.100:FF:000003">
    <property type="entry name" value="Acetyl-CoA carboxylase biotin carboxyl carrier protein"/>
    <property type="match status" value="1"/>
</dbReference>
<dbReference type="Gene3D" id="2.40.50.100">
    <property type="match status" value="1"/>
</dbReference>
<dbReference type="InterPro" id="IPR050709">
    <property type="entry name" value="Biotin_Carboxyl_Carrier/Decarb"/>
</dbReference>
<dbReference type="InterPro" id="IPR000089">
    <property type="entry name" value="Biotin_lipoyl"/>
</dbReference>
<dbReference type="InterPro" id="IPR011053">
    <property type="entry name" value="Single_hybrid_motif"/>
</dbReference>
<dbReference type="NCBIfam" id="NF004547">
    <property type="entry name" value="PRK05889.1"/>
    <property type="match status" value="1"/>
</dbReference>
<dbReference type="NCBIfam" id="NF006079">
    <property type="entry name" value="PRK08225.1"/>
    <property type="match status" value="1"/>
</dbReference>
<dbReference type="PANTHER" id="PTHR45266">
    <property type="entry name" value="OXALOACETATE DECARBOXYLASE ALPHA CHAIN"/>
    <property type="match status" value="1"/>
</dbReference>
<dbReference type="PANTHER" id="PTHR45266:SF3">
    <property type="entry name" value="OXALOACETATE DECARBOXYLASE ALPHA CHAIN"/>
    <property type="match status" value="1"/>
</dbReference>
<dbReference type="Pfam" id="PF00364">
    <property type="entry name" value="Biotin_lipoyl"/>
    <property type="match status" value="1"/>
</dbReference>
<dbReference type="SUPFAM" id="SSF51230">
    <property type="entry name" value="Single hybrid motif"/>
    <property type="match status" value="1"/>
</dbReference>
<dbReference type="PROSITE" id="PS50968">
    <property type="entry name" value="BIOTINYL_LIPOYL"/>
    <property type="match status" value="1"/>
</dbReference>
<name>BLAP_BACSU</name>
<evidence type="ECO:0000255" key="1"/>
<evidence type="ECO:0000255" key="2">
    <source>
        <dbReference type="PROSITE-ProRule" id="PRU01066"/>
    </source>
</evidence>
<evidence type="ECO:0000269" key="3">
    <source>
    </source>
</evidence>
<evidence type="ECO:0007829" key="4">
    <source>
        <dbReference type="PDB" id="1Z6H"/>
    </source>
</evidence>
<protein>
    <recommendedName>
        <fullName>Biotin/lipoyl attachment protein</fullName>
        <shortName>BLAP</shortName>
    </recommendedName>
</protein>
<accession>C0H419</accession>
<accession>Q9R9I3</accession>